<organism>
    <name type="scientific">Cucumis sativus</name>
    <name type="common">Cucumber</name>
    <dbReference type="NCBI Taxonomy" id="3659"/>
    <lineage>
        <taxon>Eukaryota</taxon>
        <taxon>Viridiplantae</taxon>
        <taxon>Streptophyta</taxon>
        <taxon>Embryophyta</taxon>
        <taxon>Tracheophyta</taxon>
        <taxon>Spermatophyta</taxon>
        <taxon>Magnoliopsida</taxon>
        <taxon>eudicotyledons</taxon>
        <taxon>Gunneridae</taxon>
        <taxon>Pentapetalae</taxon>
        <taxon>rosids</taxon>
        <taxon>fabids</taxon>
        <taxon>Cucurbitales</taxon>
        <taxon>Cucurbitaceae</taxon>
        <taxon>Benincaseae</taxon>
        <taxon>Cucumis</taxon>
    </lineage>
</organism>
<dbReference type="EMBL" id="DQ119058">
    <property type="protein sequence ID" value="AAZ94657.1"/>
    <property type="molecule type" value="Genomic_DNA"/>
</dbReference>
<dbReference type="EMBL" id="AJ970307">
    <property type="protein sequence ID" value="CAJ00764.1"/>
    <property type="molecule type" value="Genomic_DNA"/>
</dbReference>
<dbReference type="EMBL" id="DQ865975">
    <property type="protein sequence ID" value="ABI97423.1"/>
    <property type="molecule type" value="Genomic_DNA"/>
</dbReference>
<dbReference type="EMBL" id="DQ865976">
    <property type="protein sequence ID" value="ABI98751.1"/>
    <property type="molecule type" value="Genomic_DNA"/>
</dbReference>
<dbReference type="RefSeq" id="YP_247605.1">
    <property type="nucleotide sequence ID" value="NC_007144.1"/>
</dbReference>
<dbReference type="SMR" id="Q4VZG9"/>
<dbReference type="GeneID" id="3429376"/>
<dbReference type="KEGG" id="csv:3429376"/>
<dbReference type="OrthoDB" id="423436at2759"/>
<dbReference type="GO" id="GO:0009535">
    <property type="term" value="C:chloroplast thylakoid membrane"/>
    <property type="evidence" value="ECO:0007669"/>
    <property type="project" value="UniProtKB-SubCell"/>
</dbReference>
<dbReference type="GO" id="GO:0045259">
    <property type="term" value="C:proton-transporting ATP synthase complex"/>
    <property type="evidence" value="ECO:0007669"/>
    <property type="project" value="UniProtKB-KW"/>
</dbReference>
<dbReference type="GO" id="GO:0005524">
    <property type="term" value="F:ATP binding"/>
    <property type="evidence" value="ECO:0007669"/>
    <property type="project" value="UniProtKB-UniRule"/>
</dbReference>
<dbReference type="GO" id="GO:0046933">
    <property type="term" value="F:proton-transporting ATP synthase activity, rotational mechanism"/>
    <property type="evidence" value="ECO:0007669"/>
    <property type="project" value="UniProtKB-UniRule"/>
</dbReference>
<dbReference type="CDD" id="cd12152">
    <property type="entry name" value="F1-ATPase_delta"/>
    <property type="match status" value="1"/>
</dbReference>
<dbReference type="FunFam" id="2.60.15.10:FF:000002">
    <property type="entry name" value="ATP synthase epsilon chain, chloroplastic"/>
    <property type="match status" value="1"/>
</dbReference>
<dbReference type="Gene3D" id="6.10.140.480">
    <property type="match status" value="1"/>
</dbReference>
<dbReference type="Gene3D" id="2.60.15.10">
    <property type="entry name" value="F0F1 ATP synthase delta/epsilon subunit, N-terminal"/>
    <property type="match status" value="1"/>
</dbReference>
<dbReference type="HAMAP" id="MF_00530">
    <property type="entry name" value="ATP_synth_epsil_bac"/>
    <property type="match status" value="1"/>
</dbReference>
<dbReference type="InterPro" id="IPR001469">
    <property type="entry name" value="ATP_synth_F1_dsu/esu"/>
</dbReference>
<dbReference type="InterPro" id="IPR020546">
    <property type="entry name" value="ATP_synth_F1_dsu/esu_N"/>
</dbReference>
<dbReference type="InterPro" id="IPR020547">
    <property type="entry name" value="ATP_synth_F1_esu_C"/>
</dbReference>
<dbReference type="InterPro" id="IPR036771">
    <property type="entry name" value="ATPsynth_dsu/esu_N"/>
</dbReference>
<dbReference type="NCBIfam" id="TIGR01216">
    <property type="entry name" value="ATP_synt_epsi"/>
    <property type="match status" value="1"/>
</dbReference>
<dbReference type="PANTHER" id="PTHR13822">
    <property type="entry name" value="ATP SYNTHASE DELTA/EPSILON CHAIN"/>
    <property type="match status" value="1"/>
</dbReference>
<dbReference type="PANTHER" id="PTHR13822:SF10">
    <property type="entry name" value="ATP SYNTHASE EPSILON CHAIN, CHLOROPLASTIC"/>
    <property type="match status" value="1"/>
</dbReference>
<dbReference type="Pfam" id="PF00401">
    <property type="entry name" value="ATP-synt_DE"/>
    <property type="match status" value="1"/>
</dbReference>
<dbReference type="Pfam" id="PF02823">
    <property type="entry name" value="ATP-synt_DE_N"/>
    <property type="match status" value="1"/>
</dbReference>
<dbReference type="SUPFAM" id="SSF51344">
    <property type="entry name" value="Epsilon subunit of F1F0-ATP synthase N-terminal domain"/>
    <property type="match status" value="1"/>
</dbReference>
<accession>Q4VZG9</accession>
<accession>A5J1U0</accession>
<keyword id="KW-0066">ATP synthesis</keyword>
<keyword id="KW-0139">CF(1)</keyword>
<keyword id="KW-0150">Chloroplast</keyword>
<keyword id="KW-0375">Hydrogen ion transport</keyword>
<keyword id="KW-0406">Ion transport</keyword>
<keyword id="KW-0472">Membrane</keyword>
<keyword id="KW-0934">Plastid</keyword>
<keyword id="KW-0793">Thylakoid</keyword>
<keyword id="KW-0813">Transport</keyword>
<geneLocation type="chloroplast"/>
<proteinExistence type="inferred from homology"/>
<feature type="chain" id="PRO_0000275195" description="ATP synthase epsilon chain, chloroplastic">
    <location>
        <begin position="1"/>
        <end position="136"/>
    </location>
</feature>
<comment type="function">
    <text evidence="1">Produces ATP from ADP in the presence of a proton gradient across the membrane.</text>
</comment>
<comment type="subunit">
    <text evidence="1">F-type ATPases have 2 components, CF(1) - the catalytic core - and CF(0) - the membrane proton channel. CF(1) has five subunits: alpha(3), beta(3), gamma(1), delta(1), epsilon(1). CF(0) has three main subunits: a, b and c.</text>
</comment>
<comment type="subcellular location">
    <subcellularLocation>
        <location evidence="1">Plastid</location>
        <location evidence="1">Chloroplast thylakoid membrane</location>
        <topology evidence="1">Peripheral membrane protein</topology>
    </subcellularLocation>
</comment>
<comment type="similarity">
    <text evidence="1">Belongs to the ATPase epsilon chain family.</text>
</comment>
<reference key="1">
    <citation type="journal article" date="2006" name="Plant Cell Rep.">
        <title>Complete sequence and organization of the cucumber (Cucumis sativus L. cv. Baekmibaekdadagi) chloroplast genome.</title>
        <authorList>
            <person name="Kim J.-S."/>
            <person name="Jung J.D."/>
            <person name="Lee J.-A."/>
            <person name="Park H.-W."/>
            <person name="Oh K.-H."/>
            <person name="Jeong W.J."/>
            <person name="Choi D.-W."/>
            <person name="Liu J.R."/>
            <person name="Cho K.Y."/>
        </authorList>
    </citation>
    <scope>NUCLEOTIDE SEQUENCE [LARGE SCALE GENOMIC DNA]</scope>
    <source>
        <strain>cv. Baekmibaekdadagi</strain>
    </source>
</reference>
<reference key="2">
    <citation type="journal article" date="2007" name="Cell. Mol. Biol. Lett.">
        <title>The complete structure of the cucumber (Cucumis sativus L.) chloroplast genome: its composition and comparative analysis.</title>
        <authorList>
            <person name="Plader W.W."/>
            <person name="Yukawa Y."/>
            <person name="Sugiura M."/>
            <person name="Malepszy S."/>
        </authorList>
    </citation>
    <scope>NUCLEOTIDE SEQUENCE [LARGE SCALE GENOMIC DNA]</scope>
    <source>
        <strain>cv. Borszczagowski</strain>
    </source>
</reference>
<reference key="3">
    <citation type="journal article" date="2007" name="Genome">
        <title>Sequencing cucumber (Cucumis sativus L.) chloroplast genomes identifies differences between chilling-tolerant and -susceptible cucumber lines.</title>
        <authorList>
            <person name="Chung S.-M."/>
            <person name="Gordon V.S."/>
            <person name="Staub J.E."/>
        </authorList>
    </citation>
    <scope>NUCLEOTIDE SEQUENCE [LARGE SCALE GENOMIC DNA]</scope>
    <source>
        <strain>cv. Chipper</strain>
        <strain>cv. Gy14</strain>
    </source>
</reference>
<sequence length="136" mass="14775">MTLNLSVLTPNRIIWDSEVKEIILVTNSGQIGVLPDHAPIATAVDIGILKIRLTPNDGWLTMALMGGFARIGNNEVTILVNDAEKASDIDPQEAQQTLEIAEANLRKAQGKRQTIEANLALRRARTRVEAINGVPS</sequence>
<name>ATPE_CUCSA</name>
<evidence type="ECO:0000255" key="1">
    <source>
        <dbReference type="HAMAP-Rule" id="MF_00530"/>
    </source>
</evidence>
<gene>
    <name evidence="1" type="primary">atpE</name>
    <name type="ordered locus">CsCp046</name>
</gene>
<protein>
    <recommendedName>
        <fullName evidence="1">ATP synthase epsilon chain, chloroplastic</fullName>
    </recommendedName>
    <alternativeName>
        <fullName evidence="1">ATP synthase F1 sector epsilon subunit</fullName>
    </alternativeName>
    <alternativeName>
        <fullName evidence="1">F-ATPase epsilon subunit</fullName>
    </alternativeName>
</protein>